<protein>
    <recommendedName>
        <fullName evidence="4">PPE family protein PPE10</fullName>
    </recommendedName>
</protein>
<proteinExistence type="inferred from homology"/>
<reference key="1">
    <citation type="journal article" date="2008" name="Genome Res.">
        <title>Insights from the complete genome sequence of Mycobacterium marinum on the evolution of Mycobacterium tuberculosis.</title>
        <authorList>
            <person name="Stinear T.P."/>
            <person name="Seemann T."/>
            <person name="Harrison P.F."/>
            <person name="Jenkin G.A."/>
            <person name="Davies J.K."/>
            <person name="Johnson P.D."/>
            <person name="Abdellah Z."/>
            <person name="Arrowsmith C."/>
            <person name="Chillingworth T."/>
            <person name="Churcher C."/>
            <person name="Clarke K."/>
            <person name="Cronin A."/>
            <person name="Davis P."/>
            <person name="Goodhead I."/>
            <person name="Holroyd N."/>
            <person name="Jagels K."/>
            <person name="Lord A."/>
            <person name="Moule S."/>
            <person name="Mungall K."/>
            <person name="Norbertczak H."/>
            <person name="Quail M.A."/>
            <person name="Rabbinowitsch E."/>
            <person name="Walker D."/>
            <person name="White B."/>
            <person name="Whitehead S."/>
            <person name="Small P.L."/>
            <person name="Brosch R."/>
            <person name="Ramakrishnan L."/>
            <person name="Fischbach M.A."/>
            <person name="Parkhill J."/>
            <person name="Cole S.T."/>
        </authorList>
    </citation>
    <scope>NUCLEOTIDE SEQUENCE [LARGE SCALE GENOMIC DNA]</scope>
    <source>
        <strain>ATCC BAA-535 / M</strain>
    </source>
</reference>
<reference key="2">
    <citation type="journal article" date="2016" name="PLoS Pathog.">
        <title>The ESX-5 system of pathogenic mycobacteria is involved in capsule integrity and virulence through its substrate PPE10.</title>
        <authorList>
            <person name="Ates L.S."/>
            <person name="van der Woude A.D."/>
            <person name="Bestebroer J."/>
            <person name="van Stempvoort G."/>
            <person name="Musters R.J."/>
            <person name="Garcia-Vallejo J.J."/>
            <person name="Picavet D.I."/>
            <person name="van de Weerd R."/>
            <person name="Maletta M."/>
            <person name="Kuijl C.P."/>
            <person name="van der Wel N.N."/>
            <person name="Bitter W."/>
        </authorList>
    </citation>
    <scope>FUNCTION</scope>
    <scope>SUBCELLULAR LOCATION</scope>
    <scope>DISRUPTION PHENOTYPE</scope>
    <source>
        <strain>E11</strain>
    </source>
</reference>
<feature type="chain" id="PRO_0000450444" description="PPE family protein PPE10">
    <location>
        <begin position="1"/>
        <end position="488"/>
    </location>
</feature>
<feature type="region of interest" description="Disordered" evidence="1">
    <location>
        <begin position="207"/>
        <end position="232"/>
    </location>
</feature>
<feature type="region of interest" description="Disordered" evidence="1">
    <location>
        <begin position="443"/>
        <end position="488"/>
    </location>
</feature>
<accession>B2HQQ1</accession>
<organism>
    <name type="scientific">Mycobacterium marinum (strain ATCC BAA-535 / M)</name>
    <dbReference type="NCBI Taxonomy" id="216594"/>
    <lineage>
        <taxon>Bacteria</taxon>
        <taxon>Bacillati</taxon>
        <taxon>Actinomycetota</taxon>
        <taxon>Actinomycetes</taxon>
        <taxon>Mycobacteriales</taxon>
        <taxon>Mycobacteriaceae</taxon>
        <taxon>Mycobacterium</taxon>
        <taxon>Mycobacterium ulcerans group</taxon>
    </lineage>
</organism>
<comment type="function">
    <text evidence="2">Plays a major role in the integrity and stability of the capsule.</text>
</comment>
<comment type="subcellular location">
    <subcellularLocation>
        <location evidence="2">Secreted</location>
    </subcellularLocation>
    <text evidence="2">Secreted via the ESX-5 / type VII secretion system (T7SS).</text>
</comment>
<comment type="disruption phenotype">
    <text evidence="2">Mutants have impaired capsule integrity as well as reduced surface hydrophobicity. Mutants have reduced amounts of surface localized proteins and glycolipids, and morphological differences in the capsular layer. Disruption of the gene is associated with reduced ubiquitin association in cell infection and attenuated virulence in the early stages of infection.</text>
</comment>
<comment type="similarity">
    <text evidence="4">Belongs to the mycobacterial PPE family.</text>
</comment>
<gene>
    <name evidence="3" type="primary">PPE10</name>
    <name evidence="5" type="ordered locus">MMAR_0761</name>
</gene>
<dbReference type="EMBL" id="CP000854">
    <property type="protein sequence ID" value="ACC39221.1"/>
    <property type="molecule type" value="Genomic_DNA"/>
</dbReference>
<dbReference type="RefSeq" id="WP_012392709.1">
    <property type="nucleotide sequence ID" value="NC_010612.1"/>
</dbReference>
<dbReference type="SMR" id="B2HQQ1"/>
<dbReference type="STRING" id="216594.MMAR_0761"/>
<dbReference type="KEGG" id="mmi:MMAR_0761"/>
<dbReference type="eggNOG" id="COG5651">
    <property type="taxonomic scope" value="Bacteria"/>
</dbReference>
<dbReference type="HOGENOM" id="CLU_000243_4_6_11"/>
<dbReference type="OrthoDB" id="4749881at2"/>
<dbReference type="PHI-base" id="PHI:6278"/>
<dbReference type="Proteomes" id="UP000001190">
    <property type="component" value="Chromosome"/>
</dbReference>
<dbReference type="GO" id="GO:0005576">
    <property type="term" value="C:extracellular region"/>
    <property type="evidence" value="ECO:0007669"/>
    <property type="project" value="UniProtKB-SubCell"/>
</dbReference>
<dbReference type="GO" id="GO:0052572">
    <property type="term" value="P:response to host immune response"/>
    <property type="evidence" value="ECO:0007669"/>
    <property type="project" value="TreeGrafter"/>
</dbReference>
<dbReference type="FunFam" id="1.20.1260.20:FF:000001">
    <property type="entry name" value="PPE family protein PPE41"/>
    <property type="match status" value="1"/>
</dbReference>
<dbReference type="Gene3D" id="1.20.1260.20">
    <property type="entry name" value="PPE superfamily"/>
    <property type="match status" value="1"/>
</dbReference>
<dbReference type="InterPro" id="IPR002989">
    <property type="entry name" value="Mycobac_pentapep"/>
</dbReference>
<dbReference type="InterPro" id="IPR000030">
    <property type="entry name" value="PPE_dom"/>
</dbReference>
<dbReference type="InterPro" id="IPR038332">
    <property type="entry name" value="PPE_sf"/>
</dbReference>
<dbReference type="PANTHER" id="PTHR46766">
    <property type="entry name" value="GLUTAMINE-RICH PROTEIN 2"/>
    <property type="match status" value="1"/>
</dbReference>
<dbReference type="PANTHER" id="PTHR46766:SF1">
    <property type="entry name" value="GLUTAMINE-RICH PROTEIN 2"/>
    <property type="match status" value="1"/>
</dbReference>
<dbReference type="Pfam" id="PF01469">
    <property type="entry name" value="Pentapeptide_2"/>
    <property type="match status" value="2"/>
</dbReference>
<dbReference type="Pfam" id="PF00823">
    <property type="entry name" value="PPE"/>
    <property type="match status" value="1"/>
</dbReference>
<dbReference type="SUPFAM" id="SSF140459">
    <property type="entry name" value="PE/PPE dimer-like"/>
    <property type="match status" value="1"/>
</dbReference>
<name>PPE10_MYCMM</name>
<keyword id="KW-1185">Reference proteome</keyword>
<keyword id="KW-0964">Secreted</keyword>
<sequence length="488" mass="47142">MTNPHFAWLPPEINSALMFAGPGAGPLLAAAAAWGGLAEELASAVSSFSSVTSELTSGSWLGPSAAAMMAVATQYMAWLGAAAAQAEQAAAQAAVTAGAFESALAATVQPAVVTANRGLMQVLAATNWLGFNTPAIMDIEAAYEQMWALDVAAMAAYHAEASAAASALAPWKQVLRNLGIDIGKNGQINLGFGNSGTGNVGNNNVGNNNWGSGNTGSSNVGTGNTGSSNIGSGNTGNSNVGLGNLGSGNVGFGNTGNGDFGFGLTGDHQFGFGGFNSGSGNVGIGNSGTGNVGFFNSGNGNMGIGNSGSLNSGLGNSGSMSTGFGTASMSSGMWQSMHGSDMASSTSLASSATYATGGTATLSSGILSSALAHTGGLNPALAGGLTPTAATPAAAAPAAAAPVAAAAADAGPVSAGANSGSTAGAGLRSPAAGYSGLYNSANSDAGARSVATREAPANAGAGIPRSSFYPNRETADSEADIQLPLRTE</sequence>
<evidence type="ECO:0000256" key="1">
    <source>
        <dbReference type="SAM" id="MobiDB-lite"/>
    </source>
</evidence>
<evidence type="ECO:0000269" key="2">
    <source>
    </source>
</evidence>
<evidence type="ECO:0000303" key="3">
    <source>
    </source>
</evidence>
<evidence type="ECO:0000305" key="4"/>
<evidence type="ECO:0000312" key="5">
    <source>
        <dbReference type="EMBL" id="ACC39221.1"/>
    </source>
</evidence>